<proteinExistence type="inferred from homology"/>
<feature type="chain" id="PRO_1000000978" description="Dihydroxy-acid dehydratase">
    <location>
        <begin position="1"/>
        <end position="613"/>
    </location>
</feature>
<feature type="active site" description="Proton acceptor" evidence="1">
    <location>
        <position position="519"/>
    </location>
</feature>
<feature type="binding site" evidence="1">
    <location>
        <position position="81"/>
    </location>
    <ligand>
        <name>Mg(2+)</name>
        <dbReference type="ChEBI" id="CHEBI:18420"/>
    </ligand>
</feature>
<feature type="binding site" evidence="1">
    <location>
        <position position="122"/>
    </location>
    <ligand>
        <name>[2Fe-2S] cluster</name>
        <dbReference type="ChEBI" id="CHEBI:190135"/>
    </ligand>
</feature>
<feature type="binding site" evidence="1">
    <location>
        <position position="123"/>
    </location>
    <ligand>
        <name>Mg(2+)</name>
        <dbReference type="ChEBI" id="CHEBI:18420"/>
    </ligand>
</feature>
<feature type="binding site" description="via carbamate group" evidence="1">
    <location>
        <position position="124"/>
    </location>
    <ligand>
        <name>Mg(2+)</name>
        <dbReference type="ChEBI" id="CHEBI:18420"/>
    </ligand>
</feature>
<feature type="binding site" evidence="1">
    <location>
        <position position="197"/>
    </location>
    <ligand>
        <name>[2Fe-2S] cluster</name>
        <dbReference type="ChEBI" id="CHEBI:190135"/>
    </ligand>
</feature>
<feature type="binding site" evidence="1">
    <location>
        <position position="493"/>
    </location>
    <ligand>
        <name>Mg(2+)</name>
        <dbReference type="ChEBI" id="CHEBI:18420"/>
    </ligand>
</feature>
<feature type="modified residue" description="N6-carboxylysine" evidence="1">
    <location>
        <position position="124"/>
    </location>
</feature>
<comment type="function">
    <text evidence="1">Functions in the biosynthesis of branched-chain amino acids. Catalyzes the dehydration of (2R,3R)-2,3-dihydroxy-3-methylpentanoate (2,3-dihydroxy-3-methylvalerate) into 2-oxo-3-methylpentanoate (2-oxo-3-methylvalerate) and of (2R)-2,3-dihydroxy-3-methylbutanoate (2,3-dihydroxyisovalerate) into 2-oxo-3-methylbutanoate (2-oxoisovalerate), the penultimate precursor to L-isoleucine and L-valine, respectively.</text>
</comment>
<comment type="catalytic activity">
    <reaction evidence="1">
        <text>(2R)-2,3-dihydroxy-3-methylbutanoate = 3-methyl-2-oxobutanoate + H2O</text>
        <dbReference type="Rhea" id="RHEA:24809"/>
        <dbReference type="ChEBI" id="CHEBI:11851"/>
        <dbReference type="ChEBI" id="CHEBI:15377"/>
        <dbReference type="ChEBI" id="CHEBI:49072"/>
        <dbReference type="EC" id="4.2.1.9"/>
    </reaction>
    <physiologicalReaction direction="left-to-right" evidence="1">
        <dbReference type="Rhea" id="RHEA:24810"/>
    </physiologicalReaction>
</comment>
<comment type="catalytic activity">
    <reaction evidence="1">
        <text>(2R,3R)-2,3-dihydroxy-3-methylpentanoate = (S)-3-methyl-2-oxopentanoate + H2O</text>
        <dbReference type="Rhea" id="RHEA:27694"/>
        <dbReference type="ChEBI" id="CHEBI:15377"/>
        <dbReference type="ChEBI" id="CHEBI:35146"/>
        <dbReference type="ChEBI" id="CHEBI:49258"/>
        <dbReference type="EC" id="4.2.1.9"/>
    </reaction>
    <physiologicalReaction direction="left-to-right" evidence="1">
        <dbReference type="Rhea" id="RHEA:27695"/>
    </physiologicalReaction>
</comment>
<comment type="cofactor">
    <cofactor evidence="1">
        <name>[2Fe-2S] cluster</name>
        <dbReference type="ChEBI" id="CHEBI:190135"/>
    </cofactor>
    <text evidence="1">Binds 1 [2Fe-2S] cluster per subunit. This cluster acts as a Lewis acid cofactor.</text>
</comment>
<comment type="cofactor">
    <cofactor evidence="1">
        <name>Mg(2+)</name>
        <dbReference type="ChEBI" id="CHEBI:18420"/>
    </cofactor>
</comment>
<comment type="pathway">
    <text evidence="1">Amino-acid biosynthesis; L-isoleucine biosynthesis; L-isoleucine from 2-oxobutanoate: step 3/4.</text>
</comment>
<comment type="pathway">
    <text evidence="1">Amino-acid biosynthesis; L-valine biosynthesis; L-valine from pyruvate: step 3/4.</text>
</comment>
<comment type="subunit">
    <text evidence="1">Homodimer.</text>
</comment>
<comment type="similarity">
    <text evidence="1">Belongs to the IlvD/Edd family.</text>
</comment>
<sequence>MIPLRSKVTTVGRNAAGARALWRATGTKENEFGKPIVAIVNSYTQFVPGHVHLKNVGDIVADAVRKAGGVPKEFNTIAVDDGIAMGHGGMLYSLPSREIIADSVEYMVNAHTADAMVCISNCDKITPGMLNAAMRLNIPVVFVSGGPMEAGKAVVVDGVAHAPTDLITAISASASDAVDDAGLAAVEASACPTCGSCSGMFTANSMNCLTEALGLSLPGNGSTLATHAARRALFEKAGETVVELCRRYYGEEDESVLPRGIATKKAFENAMALDMAMGGSTNTILHILAAAQEGEVDFDLADIDELSKNVPCLSKVAPNSDYHMEDVHRAGGIPALLGELNRGGLLNKDVHSVHSNDLEGWLDDWDIRSGKTTEVATELFHAAPGGIRTTEAFSTENRWDELDTDAAKGCIRDVEHAYTADGGLVVLRGNISPDGAVIKSAGIEEELWNFTGPARVVESQEEAVSVILTKTIQAGEVLVVRYEGPSGGPGMQEMLHPTAFLKGSGLGKKCALITDGRFSGGSSGLSIGHVSPEAAHGGVIGLIENGDIVSIDVHNRKLEVQVSNEELQRRRDAMNASEKPWQPVNRNRVVTKALRAYAKMATSADKGAVRQVD</sequence>
<name>ILVD_CORGB</name>
<organism>
    <name type="scientific">Corynebacterium glutamicum (strain R)</name>
    <dbReference type="NCBI Taxonomy" id="340322"/>
    <lineage>
        <taxon>Bacteria</taxon>
        <taxon>Bacillati</taxon>
        <taxon>Actinomycetota</taxon>
        <taxon>Actinomycetes</taxon>
        <taxon>Mycobacteriales</taxon>
        <taxon>Corynebacteriaceae</taxon>
        <taxon>Corynebacterium</taxon>
    </lineage>
</organism>
<reference key="1">
    <citation type="journal article" date="2007" name="Microbiology">
        <title>Comparative analysis of the Corynebacterium glutamicum group and complete genome sequence of strain R.</title>
        <authorList>
            <person name="Yukawa H."/>
            <person name="Omumasaba C.A."/>
            <person name="Nonaka H."/>
            <person name="Kos P."/>
            <person name="Okai N."/>
            <person name="Suzuki N."/>
            <person name="Suda M."/>
            <person name="Tsuge Y."/>
            <person name="Watanabe J."/>
            <person name="Ikeda Y."/>
            <person name="Vertes A.A."/>
            <person name="Inui M."/>
        </authorList>
    </citation>
    <scope>NUCLEOTIDE SEQUENCE [LARGE SCALE GENOMIC DNA]</scope>
    <source>
        <strain>R</strain>
    </source>
</reference>
<gene>
    <name evidence="1" type="primary">ilvD</name>
    <name type="ordered locus">cgR_1344</name>
</gene>
<protein>
    <recommendedName>
        <fullName evidence="1">Dihydroxy-acid dehydratase</fullName>
        <shortName evidence="1">DAD</shortName>
        <ecNumber evidence="1">4.2.1.9</ecNumber>
    </recommendedName>
</protein>
<dbReference type="EC" id="4.2.1.9" evidence="1"/>
<dbReference type="EMBL" id="AP009044">
    <property type="protein sequence ID" value="BAF54326.1"/>
    <property type="molecule type" value="Genomic_DNA"/>
</dbReference>
<dbReference type="RefSeq" id="WP_011897124.1">
    <property type="nucleotide sequence ID" value="NC_009342.1"/>
</dbReference>
<dbReference type="SMR" id="A4QDM9"/>
<dbReference type="KEGG" id="cgt:cgR_1344"/>
<dbReference type="HOGENOM" id="CLU_014271_4_3_11"/>
<dbReference type="PhylomeDB" id="A4QDM9"/>
<dbReference type="UniPathway" id="UPA00047">
    <property type="reaction ID" value="UER00057"/>
</dbReference>
<dbReference type="UniPathway" id="UPA00049">
    <property type="reaction ID" value="UER00061"/>
</dbReference>
<dbReference type="Proteomes" id="UP000006698">
    <property type="component" value="Chromosome"/>
</dbReference>
<dbReference type="GO" id="GO:0005829">
    <property type="term" value="C:cytosol"/>
    <property type="evidence" value="ECO:0007669"/>
    <property type="project" value="TreeGrafter"/>
</dbReference>
<dbReference type="GO" id="GO:0051537">
    <property type="term" value="F:2 iron, 2 sulfur cluster binding"/>
    <property type="evidence" value="ECO:0007669"/>
    <property type="project" value="UniProtKB-UniRule"/>
</dbReference>
<dbReference type="GO" id="GO:0004160">
    <property type="term" value="F:dihydroxy-acid dehydratase activity"/>
    <property type="evidence" value="ECO:0007669"/>
    <property type="project" value="UniProtKB-UniRule"/>
</dbReference>
<dbReference type="GO" id="GO:0000287">
    <property type="term" value="F:magnesium ion binding"/>
    <property type="evidence" value="ECO:0007669"/>
    <property type="project" value="UniProtKB-UniRule"/>
</dbReference>
<dbReference type="GO" id="GO:0009097">
    <property type="term" value="P:isoleucine biosynthetic process"/>
    <property type="evidence" value="ECO:0007669"/>
    <property type="project" value="UniProtKB-UniRule"/>
</dbReference>
<dbReference type="GO" id="GO:0009099">
    <property type="term" value="P:L-valine biosynthetic process"/>
    <property type="evidence" value="ECO:0007669"/>
    <property type="project" value="UniProtKB-UniRule"/>
</dbReference>
<dbReference type="FunFam" id="3.50.30.80:FF:000001">
    <property type="entry name" value="Dihydroxy-acid dehydratase"/>
    <property type="match status" value="1"/>
</dbReference>
<dbReference type="Gene3D" id="3.50.30.80">
    <property type="entry name" value="IlvD/EDD C-terminal domain-like"/>
    <property type="match status" value="1"/>
</dbReference>
<dbReference type="HAMAP" id="MF_00012">
    <property type="entry name" value="IlvD"/>
    <property type="match status" value="1"/>
</dbReference>
<dbReference type="InterPro" id="IPR042096">
    <property type="entry name" value="Dihydro-acid_dehy_C"/>
</dbReference>
<dbReference type="InterPro" id="IPR004404">
    <property type="entry name" value="DihydroxyA_deHydtase"/>
</dbReference>
<dbReference type="InterPro" id="IPR020558">
    <property type="entry name" value="DiOHA_6PGluconate_deHydtase_CS"/>
</dbReference>
<dbReference type="InterPro" id="IPR056740">
    <property type="entry name" value="ILV_EDD_C"/>
</dbReference>
<dbReference type="InterPro" id="IPR000581">
    <property type="entry name" value="ILV_EDD_N"/>
</dbReference>
<dbReference type="InterPro" id="IPR037237">
    <property type="entry name" value="IlvD/EDD_N"/>
</dbReference>
<dbReference type="NCBIfam" id="TIGR00110">
    <property type="entry name" value="ilvD"/>
    <property type="match status" value="1"/>
</dbReference>
<dbReference type="NCBIfam" id="NF009103">
    <property type="entry name" value="PRK12448.1"/>
    <property type="match status" value="1"/>
</dbReference>
<dbReference type="PANTHER" id="PTHR43661">
    <property type="entry name" value="D-XYLONATE DEHYDRATASE"/>
    <property type="match status" value="1"/>
</dbReference>
<dbReference type="PANTHER" id="PTHR43661:SF3">
    <property type="entry name" value="D-XYLONATE DEHYDRATASE YAGF-RELATED"/>
    <property type="match status" value="1"/>
</dbReference>
<dbReference type="Pfam" id="PF24877">
    <property type="entry name" value="ILV_EDD_C"/>
    <property type="match status" value="1"/>
</dbReference>
<dbReference type="Pfam" id="PF00920">
    <property type="entry name" value="ILVD_EDD_N"/>
    <property type="match status" value="1"/>
</dbReference>
<dbReference type="SUPFAM" id="SSF143975">
    <property type="entry name" value="IlvD/EDD N-terminal domain-like"/>
    <property type="match status" value="1"/>
</dbReference>
<dbReference type="SUPFAM" id="SSF52016">
    <property type="entry name" value="LeuD/IlvD-like"/>
    <property type="match status" value="1"/>
</dbReference>
<dbReference type="PROSITE" id="PS00886">
    <property type="entry name" value="ILVD_EDD_1"/>
    <property type="match status" value="1"/>
</dbReference>
<dbReference type="PROSITE" id="PS00887">
    <property type="entry name" value="ILVD_EDD_2"/>
    <property type="match status" value="1"/>
</dbReference>
<evidence type="ECO:0000255" key="1">
    <source>
        <dbReference type="HAMAP-Rule" id="MF_00012"/>
    </source>
</evidence>
<accession>A4QDM9</accession>
<keyword id="KW-0001">2Fe-2S</keyword>
<keyword id="KW-0028">Amino-acid biosynthesis</keyword>
<keyword id="KW-0100">Branched-chain amino acid biosynthesis</keyword>
<keyword id="KW-0408">Iron</keyword>
<keyword id="KW-0411">Iron-sulfur</keyword>
<keyword id="KW-0456">Lyase</keyword>
<keyword id="KW-0460">Magnesium</keyword>
<keyword id="KW-0479">Metal-binding</keyword>